<keyword id="KW-0028">Amino-acid biosynthesis</keyword>
<keyword id="KW-0963">Cytoplasm</keyword>
<keyword id="KW-0554">One-carbon metabolism</keyword>
<keyword id="KW-0663">Pyridoxal phosphate</keyword>
<keyword id="KW-0808">Transferase</keyword>
<proteinExistence type="inferred from homology"/>
<accession>A9BIK8</accession>
<sequence>MWEDLKSSDNEVYEILQKELKRQEYGLELIASENYASKSVMEAAGSIFTNKYAEGYPKRRYYGGCEYIDEVETLARDRAKELFNAKFANVQPHSGSQANMGAYLALMKPGDTLMGMSLSHGGHLTHGAPVNFSGMLFNVVSYGVDEETETINYDEVERIAKDAKPKVIVAGGSAYSRIIDFKRFREIADEVGAYLMVDMAHFAGLVAAGIHPNPVEYAHVVTSTTHKTLRGPRGGIILTNDSDIYKSINKIIFPGIQGGPLEHIIAAKAVAFKEAMSGEFKEYQKQVVRNSKALSNELASKNLRIVSGGTDTHLFLVDLSELNITGKALEKALGQCDITVNKNTVPKETLSPFVTSGIRIGTPAVTTRGMKEEEMKEIASMIAKVANNVLDEEGNIDKDLAQEIKKDVVSLCQRFPMYADLIE</sequence>
<gene>
    <name evidence="1" type="primary">glyA</name>
    <name type="ordered locus">Pmob_1468</name>
</gene>
<comment type="function">
    <text evidence="1">Catalyzes the reversible interconversion of serine and glycine with tetrahydrofolate (THF) serving as the one-carbon carrier. This reaction serves as the major source of one-carbon groups required for the biosynthesis of purines, thymidylate, methionine, and other important biomolecules. Also exhibits THF-independent aldolase activity toward beta-hydroxyamino acids, producing glycine and aldehydes, via a retro-aldol mechanism.</text>
</comment>
<comment type="catalytic activity">
    <reaction evidence="1">
        <text>(6R)-5,10-methylene-5,6,7,8-tetrahydrofolate + glycine + H2O = (6S)-5,6,7,8-tetrahydrofolate + L-serine</text>
        <dbReference type="Rhea" id="RHEA:15481"/>
        <dbReference type="ChEBI" id="CHEBI:15377"/>
        <dbReference type="ChEBI" id="CHEBI:15636"/>
        <dbReference type="ChEBI" id="CHEBI:33384"/>
        <dbReference type="ChEBI" id="CHEBI:57305"/>
        <dbReference type="ChEBI" id="CHEBI:57453"/>
        <dbReference type="EC" id="2.1.2.1"/>
    </reaction>
</comment>
<comment type="cofactor">
    <cofactor evidence="1">
        <name>pyridoxal 5'-phosphate</name>
        <dbReference type="ChEBI" id="CHEBI:597326"/>
    </cofactor>
</comment>
<comment type="pathway">
    <text evidence="1">One-carbon metabolism; tetrahydrofolate interconversion.</text>
</comment>
<comment type="pathway">
    <text evidence="1">Amino-acid biosynthesis; glycine biosynthesis; glycine from L-serine: step 1/1.</text>
</comment>
<comment type="subunit">
    <text evidence="1">Homodimer.</text>
</comment>
<comment type="subcellular location">
    <subcellularLocation>
        <location evidence="1">Cytoplasm</location>
    </subcellularLocation>
</comment>
<comment type="similarity">
    <text evidence="1">Belongs to the SHMT family.</text>
</comment>
<dbReference type="EC" id="2.1.2.1" evidence="1"/>
<dbReference type="EMBL" id="CP000879">
    <property type="protein sequence ID" value="ABX32171.1"/>
    <property type="molecule type" value="Genomic_DNA"/>
</dbReference>
<dbReference type="RefSeq" id="WP_012209270.1">
    <property type="nucleotide sequence ID" value="NC_010003.1"/>
</dbReference>
<dbReference type="SMR" id="A9BIK8"/>
<dbReference type="STRING" id="403833.Pmob_1468"/>
<dbReference type="KEGG" id="pmo:Pmob_1468"/>
<dbReference type="eggNOG" id="COG0112">
    <property type="taxonomic scope" value="Bacteria"/>
</dbReference>
<dbReference type="HOGENOM" id="CLU_022477_2_1_0"/>
<dbReference type="OrthoDB" id="9803846at2"/>
<dbReference type="UniPathway" id="UPA00193"/>
<dbReference type="UniPathway" id="UPA00288">
    <property type="reaction ID" value="UER01023"/>
</dbReference>
<dbReference type="Proteomes" id="UP000000789">
    <property type="component" value="Chromosome"/>
</dbReference>
<dbReference type="GO" id="GO:0005829">
    <property type="term" value="C:cytosol"/>
    <property type="evidence" value="ECO:0007669"/>
    <property type="project" value="TreeGrafter"/>
</dbReference>
<dbReference type="GO" id="GO:0004372">
    <property type="term" value="F:glycine hydroxymethyltransferase activity"/>
    <property type="evidence" value="ECO:0007669"/>
    <property type="project" value="UniProtKB-UniRule"/>
</dbReference>
<dbReference type="GO" id="GO:0030170">
    <property type="term" value="F:pyridoxal phosphate binding"/>
    <property type="evidence" value="ECO:0007669"/>
    <property type="project" value="UniProtKB-UniRule"/>
</dbReference>
<dbReference type="GO" id="GO:0019264">
    <property type="term" value="P:glycine biosynthetic process from serine"/>
    <property type="evidence" value="ECO:0007669"/>
    <property type="project" value="UniProtKB-UniRule"/>
</dbReference>
<dbReference type="GO" id="GO:0035999">
    <property type="term" value="P:tetrahydrofolate interconversion"/>
    <property type="evidence" value="ECO:0007669"/>
    <property type="project" value="UniProtKB-UniRule"/>
</dbReference>
<dbReference type="CDD" id="cd00378">
    <property type="entry name" value="SHMT"/>
    <property type="match status" value="1"/>
</dbReference>
<dbReference type="FunFam" id="3.40.640.10:FF:000001">
    <property type="entry name" value="Serine hydroxymethyltransferase"/>
    <property type="match status" value="1"/>
</dbReference>
<dbReference type="Gene3D" id="3.90.1150.10">
    <property type="entry name" value="Aspartate Aminotransferase, domain 1"/>
    <property type="match status" value="1"/>
</dbReference>
<dbReference type="Gene3D" id="3.40.640.10">
    <property type="entry name" value="Type I PLP-dependent aspartate aminotransferase-like (Major domain)"/>
    <property type="match status" value="1"/>
</dbReference>
<dbReference type="HAMAP" id="MF_00051">
    <property type="entry name" value="SHMT"/>
    <property type="match status" value="1"/>
</dbReference>
<dbReference type="InterPro" id="IPR015424">
    <property type="entry name" value="PyrdxlP-dep_Trfase"/>
</dbReference>
<dbReference type="InterPro" id="IPR015421">
    <property type="entry name" value="PyrdxlP-dep_Trfase_major"/>
</dbReference>
<dbReference type="InterPro" id="IPR015422">
    <property type="entry name" value="PyrdxlP-dep_Trfase_small"/>
</dbReference>
<dbReference type="InterPro" id="IPR001085">
    <property type="entry name" value="Ser_HO-MeTrfase"/>
</dbReference>
<dbReference type="InterPro" id="IPR049943">
    <property type="entry name" value="Ser_HO-MeTrfase-like"/>
</dbReference>
<dbReference type="InterPro" id="IPR019798">
    <property type="entry name" value="Ser_HO-MeTrfase_PLP_BS"/>
</dbReference>
<dbReference type="InterPro" id="IPR039429">
    <property type="entry name" value="SHMT-like_dom"/>
</dbReference>
<dbReference type="NCBIfam" id="NF000586">
    <property type="entry name" value="PRK00011.1"/>
    <property type="match status" value="1"/>
</dbReference>
<dbReference type="PANTHER" id="PTHR11680">
    <property type="entry name" value="SERINE HYDROXYMETHYLTRANSFERASE"/>
    <property type="match status" value="1"/>
</dbReference>
<dbReference type="PANTHER" id="PTHR11680:SF35">
    <property type="entry name" value="SERINE HYDROXYMETHYLTRANSFERASE 1"/>
    <property type="match status" value="1"/>
</dbReference>
<dbReference type="Pfam" id="PF00464">
    <property type="entry name" value="SHMT"/>
    <property type="match status" value="1"/>
</dbReference>
<dbReference type="PIRSF" id="PIRSF000412">
    <property type="entry name" value="SHMT"/>
    <property type="match status" value="1"/>
</dbReference>
<dbReference type="SUPFAM" id="SSF53383">
    <property type="entry name" value="PLP-dependent transferases"/>
    <property type="match status" value="1"/>
</dbReference>
<dbReference type="PROSITE" id="PS00096">
    <property type="entry name" value="SHMT"/>
    <property type="match status" value="1"/>
</dbReference>
<organism>
    <name type="scientific">Petrotoga mobilis (strain DSM 10674 / SJ95)</name>
    <dbReference type="NCBI Taxonomy" id="403833"/>
    <lineage>
        <taxon>Bacteria</taxon>
        <taxon>Thermotogati</taxon>
        <taxon>Thermotogota</taxon>
        <taxon>Thermotogae</taxon>
        <taxon>Petrotogales</taxon>
        <taxon>Petrotogaceae</taxon>
        <taxon>Petrotoga</taxon>
    </lineage>
</organism>
<protein>
    <recommendedName>
        <fullName evidence="1">Serine hydroxymethyltransferase</fullName>
        <shortName evidence="1">SHMT</shortName>
        <shortName evidence="1">Serine methylase</shortName>
        <ecNumber evidence="1">2.1.2.1</ecNumber>
    </recommendedName>
</protein>
<name>GLYA_PETMO</name>
<evidence type="ECO:0000255" key="1">
    <source>
        <dbReference type="HAMAP-Rule" id="MF_00051"/>
    </source>
</evidence>
<reference key="1">
    <citation type="submission" date="2007-11" db="EMBL/GenBank/DDBJ databases">
        <title>Complete sequence of Petroga mobilis SJ95.</title>
        <authorList>
            <consortium name="US DOE Joint Genome Institute"/>
            <person name="Copeland A."/>
            <person name="Lucas S."/>
            <person name="Lapidus A."/>
            <person name="Barry K."/>
            <person name="Glavina del Rio T."/>
            <person name="Dalin E."/>
            <person name="Tice H."/>
            <person name="Pitluck S."/>
            <person name="Meincke L."/>
            <person name="Brettin T."/>
            <person name="Bruce D."/>
            <person name="Detter J.C."/>
            <person name="Han C."/>
            <person name="Kuske C.R."/>
            <person name="Schmutz J."/>
            <person name="Larimer F."/>
            <person name="Land M."/>
            <person name="Hauser L."/>
            <person name="Kyrpides N."/>
            <person name="Mikhailova N."/>
            <person name="Noll K."/>
            <person name="Richardson P."/>
        </authorList>
    </citation>
    <scope>NUCLEOTIDE SEQUENCE [LARGE SCALE GENOMIC DNA]</scope>
    <source>
        <strain>DSM 10674 / SJ95</strain>
    </source>
</reference>
<feature type="chain" id="PRO_1000074902" description="Serine hydroxymethyltransferase">
    <location>
        <begin position="1"/>
        <end position="423"/>
    </location>
</feature>
<feature type="binding site" evidence="1">
    <location>
        <position position="118"/>
    </location>
    <ligand>
        <name>(6S)-5,6,7,8-tetrahydrofolate</name>
        <dbReference type="ChEBI" id="CHEBI:57453"/>
    </ligand>
</feature>
<feature type="binding site" evidence="1">
    <location>
        <begin position="122"/>
        <end position="124"/>
    </location>
    <ligand>
        <name>(6S)-5,6,7,8-tetrahydrofolate</name>
        <dbReference type="ChEBI" id="CHEBI:57453"/>
    </ligand>
</feature>
<feature type="binding site" evidence="1">
    <location>
        <begin position="351"/>
        <end position="353"/>
    </location>
    <ligand>
        <name>(6S)-5,6,7,8-tetrahydrofolate</name>
        <dbReference type="ChEBI" id="CHEBI:57453"/>
    </ligand>
</feature>
<feature type="site" description="Plays an important role in substrate specificity" evidence="1">
    <location>
        <position position="226"/>
    </location>
</feature>
<feature type="modified residue" description="N6-(pyridoxal phosphate)lysine" evidence="1">
    <location>
        <position position="227"/>
    </location>
</feature>